<keyword id="KW-0297">G-protein coupled receptor</keyword>
<keyword id="KW-0325">Glycoprotein</keyword>
<keyword id="KW-0472">Membrane</keyword>
<keyword id="KW-0675">Receptor</keyword>
<keyword id="KW-1185">Reference proteome</keyword>
<keyword id="KW-0716">Sensory transduction</keyword>
<keyword id="KW-0919">Taste</keyword>
<keyword id="KW-0807">Transducer</keyword>
<keyword id="KW-0812">Transmembrane</keyword>
<keyword id="KW-1133">Transmembrane helix</keyword>
<name>T2R30_PANPA</name>
<comment type="function">
    <text evidence="1">Receptor that may play a role in the perception of bitterness and is gustducin-linked. May play a role in sensing the chemical composition of the gastrointestinal content. The activity of this receptor may stimulate alpha gustducin, mediate PLC-beta-2 activation and lead to the gating of TRPM5 (By similarity).</text>
</comment>
<comment type="subcellular location">
    <subcellularLocation>
        <location>Membrane</location>
        <topology>Multi-pass membrane protein</topology>
    </subcellularLocation>
</comment>
<comment type="miscellaneous">
    <text>Most taste cells may be activated by a limited number of bitter compounds; individual taste cells can discriminate among bitter stimuli.</text>
</comment>
<comment type="similarity">
    <text evidence="3">Belongs to the G-protein coupled receptor T2R family.</text>
</comment>
<feature type="chain" id="PRO_0000082324" description="Taste receptor type 2 member 30">
    <location>
        <begin position="1"/>
        <end position="319"/>
    </location>
</feature>
<feature type="topological domain" description="Extracellular" evidence="2">
    <location>
        <position position="1"/>
    </location>
</feature>
<feature type="transmembrane region" description="Helical; Name=1" evidence="2">
    <location>
        <begin position="2"/>
        <end position="22"/>
    </location>
</feature>
<feature type="topological domain" description="Cytoplasmic" evidence="2">
    <location>
        <begin position="23"/>
        <end position="46"/>
    </location>
</feature>
<feature type="transmembrane region" description="Helical; Name=2" evidence="2">
    <location>
        <begin position="47"/>
        <end position="67"/>
    </location>
</feature>
<feature type="topological domain" description="Extracellular" evidence="2">
    <location>
        <begin position="68"/>
        <end position="86"/>
    </location>
</feature>
<feature type="transmembrane region" description="Helical; Name=3" evidence="2">
    <location>
        <begin position="87"/>
        <end position="107"/>
    </location>
</feature>
<feature type="topological domain" description="Cytoplasmic" evidence="2">
    <location>
        <begin position="108"/>
        <end position="126"/>
    </location>
</feature>
<feature type="transmembrane region" description="Helical; Name=4" evidence="2">
    <location>
        <begin position="127"/>
        <end position="147"/>
    </location>
</feature>
<feature type="topological domain" description="Extracellular" evidence="2">
    <location>
        <begin position="148"/>
        <end position="178"/>
    </location>
</feature>
<feature type="transmembrane region" description="Helical; Name=5" evidence="2">
    <location>
        <begin position="179"/>
        <end position="199"/>
    </location>
</feature>
<feature type="topological domain" description="Cytoplasmic" evidence="2">
    <location>
        <begin position="200"/>
        <end position="229"/>
    </location>
</feature>
<feature type="transmembrane region" description="Helical; Name=6" evidence="2">
    <location>
        <begin position="230"/>
        <end position="250"/>
    </location>
</feature>
<feature type="topological domain" description="Extracellular" evidence="2">
    <location>
        <begin position="251"/>
        <end position="259"/>
    </location>
</feature>
<feature type="transmembrane region" description="Helical; Name=7" evidence="2">
    <location>
        <begin position="260"/>
        <end position="280"/>
    </location>
</feature>
<feature type="topological domain" description="Cytoplasmic" evidence="2">
    <location>
        <begin position="281"/>
        <end position="319"/>
    </location>
</feature>
<feature type="glycosylation site" description="N-linked (GlcNAc...) asparagine" evidence="2">
    <location>
        <position position="161"/>
    </location>
</feature>
<feature type="glycosylation site" description="N-linked (GlcNAc...) asparagine" evidence="2">
    <location>
        <position position="176"/>
    </location>
</feature>
<feature type="sequence conflict" description="In Ref. 2; AAV28579." evidence="3" ref="2">
    <original>V</original>
    <variation>I</variation>
    <location>
        <position position="19"/>
    </location>
</feature>
<feature type="sequence conflict" description="In Ref. 2; AAV28579." evidence="3" ref="2">
    <original>Q</original>
    <variation>E</variation>
    <location>
        <position position="256"/>
    </location>
</feature>
<proteinExistence type="inferred from homology"/>
<evidence type="ECO:0000250" key="1"/>
<evidence type="ECO:0000255" key="2"/>
<evidence type="ECO:0000305" key="3"/>
<gene>
    <name type="primary">TAS2R30</name>
    <name type="synonym">TAS2R47</name>
</gene>
<organism>
    <name type="scientific">Pan paniscus</name>
    <name type="common">Pygmy chimpanzee</name>
    <name type="synonym">Bonobo</name>
    <dbReference type="NCBI Taxonomy" id="9597"/>
    <lineage>
        <taxon>Eukaryota</taxon>
        <taxon>Metazoa</taxon>
        <taxon>Chordata</taxon>
        <taxon>Craniata</taxon>
        <taxon>Vertebrata</taxon>
        <taxon>Euteleostomi</taxon>
        <taxon>Mammalia</taxon>
        <taxon>Eutheria</taxon>
        <taxon>Euarchontoglires</taxon>
        <taxon>Primates</taxon>
        <taxon>Haplorrhini</taxon>
        <taxon>Catarrhini</taxon>
        <taxon>Hominidae</taxon>
        <taxon>Pan</taxon>
    </lineage>
</organism>
<protein>
    <recommendedName>
        <fullName>Taste receptor type 2 member 30</fullName>
    </recommendedName>
    <alternativeName>
        <fullName>Taste receptor type 2 member 47</fullName>
        <shortName>T2R47</shortName>
    </alternativeName>
</protein>
<reference key="1">
    <citation type="journal article" date="2005" name="Mol. Biol. Evol.">
        <title>Evolution of bitter taste receptors in humans and apes.</title>
        <authorList>
            <person name="Fischer A."/>
            <person name="Gilad Y."/>
            <person name="Man O."/>
            <person name="Paeaebo S."/>
        </authorList>
    </citation>
    <scope>NUCLEOTIDE SEQUENCE [GENOMIC DNA]</scope>
</reference>
<reference key="2">
    <citation type="journal article" date="2004" name="Proc. Natl. Acad. Sci. U.S.A.">
        <title>Divergence of T2R chemosensory receptor families in humans, bonobos, and chimpanzees.</title>
        <authorList>
            <person name="Parry C.M."/>
            <person name="Erkner A."/>
            <person name="le Coutre J."/>
        </authorList>
    </citation>
    <scope>NUCLEOTIDE SEQUENCE [GENOMIC DNA] OF 1-309</scope>
</reference>
<sequence>MITFLPIIFSILIVVIFVVGNFANGFIALVNSIEWVKRQKISFVDQILTALAVSRVGLLWVLLLHWYATQLNPAFYSVEVRITVYNVWAVTNHFSSWLATSLSMFYLLKIANFSNLIFLRIKRRVKSVVLVILLGPLLFLVCHLFVINMDETIWTKEYEGNMTWKIKLKSAMYHSNMTLTILANFVPLTLTLISFLLLICSLCKHLKKMQLHGKGSQDPSTKVHIKALQTVTSFLLLCAIYFLSMIISVCNLGRLQKQPVFMFCQAIIFSYPSTHPFILILGNKKLKQIFLSVLWHVRYWVKDRSLRLHRFTRAALCKG</sequence>
<dbReference type="EMBL" id="AY724847">
    <property type="protein sequence ID" value="AAU21077.1"/>
    <property type="molecule type" value="Genomic_DNA"/>
</dbReference>
<dbReference type="EMBL" id="AY677151">
    <property type="protein sequence ID" value="AAV28579.1"/>
    <property type="molecule type" value="Genomic_DNA"/>
</dbReference>
<dbReference type="SMR" id="Q646E2"/>
<dbReference type="STRING" id="9597.ENSPPAP00000005987"/>
<dbReference type="GlyCosmos" id="Q646E2">
    <property type="glycosylation" value="2 sites, No reported glycans"/>
</dbReference>
<dbReference type="eggNOG" id="ENOG502TE6U">
    <property type="taxonomic scope" value="Eukaryota"/>
</dbReference>
<dbReference type="Proteomes" id="UP000240080">
    <property type="component" value="Unplaced"/>
</dbReference>
<dbReference type="GO" id="GO:0005886">
    <property type="term" value="C:plasma membrane"/>
    <property type="evidence" value="ECO:0007669"/>
    <property type="project" value="UniProtKB-ARBA"/>
</dbReference>
<dbReference type="GO" id="GO:0033038">
    <property type="term" value="F:bitter taste receptor activity"/>
    <property type="evidence" value="ECO:0007669"/>
    <property type="project" value="InterPro"/>
</dbReference>
<dbReference type="GO" id="GO:0004930">
    <property type="term" value="F:G protein-coupled receptor activity"/>
    <property type="evidence" value="ECO:0007669"/>
    <property type="project" value="UniProtKB-KW"/>
</dbReference>
<dbReference type="CDD" id="cd15027">
    <property type="entry name" value="7tm_TAS2R43-like"/>
    <property type="match status" value="1"/>
</dbReference>
<dbReference type="FunFam" id="1.20.1070.10:FF:000042">
    <property type="entry name" value="Taste receptor type 2 member 7"/>
    <property type="match status" value="1"/>
</dbReference>
<dbReference type="Gene3D" id="1.20.1070.10">
    <property type="entry name" value="Rhodopsin 7-helix transmembrane proteins"/>
    <property type="match status" value="1"/>
</dbReference>
<dbReference type="InterPro" id="IPR007960">
    <property type="entry name" value="TAS2R"/>
</dbReference>
<dbReference type="PANTHER" id="PTHR11394">
    <property type="entry name" value="TASTE RECEPTOR TYPE 2"/>
    <property type="match status" value="1"/>
</dbReference>
<dbReference type="PANTHER" id="PTHR11394:SF48">
    <property type="entry name" value="TASTE RECEPTOR TYPE 2 MEMBER 30"/>
    <property type="match status" value="1"/>
</dbReference>
<dbReference type="Pfam" id="PF05296">
    <property type="entry name" value="TAS2R"/>
    <property type="match status" value="1"/>
</dbReference>
<dbReference type="SUPFAM" id="SSF81321">
    <property type="entry name" value="Family A G protein-coupled receptor-like"/>
    <property type="match status" value="1"/>
</dbReference>
<accession>Q646E2</accession>
<accession>Q5Y4Z6</accession>